<name>SDMI_SPOLI</name>
<keyword id="KW-0044">Antibiotic</keyword>
<keyword id="KW-0929">Antimicrobial</keyword>
<keyword id="KW-0903">Direct protein sequencing</keyword>
<keyword id="KW-1015">Disulfide bond</keyword>
<keyword id="KW-0295">Fungicide</keyword>
<keyword id="KW-0391">Immunity</keyword>
<keyword id="KW-0399">Innate immunity</keyword>
<keyword id="KW-0964">Secreted</keyword>
<proteinExistence type="evidence at protein level"/>
<reference evidence="3" key="1">
    <citation type="submission" date="2002-07" db="UniProtKB">
        <authorList>
            <person name="Bulet P."/>
            <person name="Sabatier-Ehret L."/>
            <person name="Chaufaux J."/>
        </authorList>
    </citation>
    <scope>PROTEIN SEQUENCE</scope>
    <scope>FUNCTION</scope>
    <scope>SUBUNIT</scope>
    <scope>SUBCELLULAR LOCATION</scope>
    <scope>TISSUE SPECIFICITY</scope>
    <scope>INDUCTION</scope>
    <scope>DISULFIDE BONDS</scope>
    <scope>MASS SPECTROMETRY</scope>
    <source>
        <tissue>Hemolymph</tissue>
    </source>
</reference>
<organism evidence="3">
    <name type="scientific">Spodoptera littoralis</name>
    <name type="common">Egyptian cotton leafworm</name>
    <dbReference type="NCBI Taxonomy" id="7109"/>
    <lineage>
        <taxon>Eukaryota</taxon>
        <taxon>Metazoa</taxon>
        <taxon>Ecdysozoa</taxon>
        <taxon>Arthropoda</taxon>
        <taxon>Hexapoda</taxon>
        <taxon>Insecta</taxon>
        <taxon>Pterygota</taxon>
        <taxon>Neoptera</taxon>
        <taxon>Endopterygota</taxon>
        <taxon>Lepidoptera</taxon>
        <taxon>Glossata</taxon>
        <taxon>Ditrysia</taxon>
        <taxon>Noctuoidea</taxon>
        <taxon>Noctuidae</taxon>
        <taxon>Amphipyrinae</taxon>
        <taxon>Spodoptera</taxon>
    </lineage>
</organism>
<feature type="peptide" id="PRO_0000044735" description="Spodomicin">
    <location>
        <begin position="1"/>
        <end position="40"/>
    </location>
</feature>
<feature type="disulfide bond" evidence="1 2">
    <location>
        <begin position="6"/>
        <end position="20"/>
    </location>
</feature>
<feature type="disulfide bond" evidence="1 2">
    <location>
        <begin position="10"/>
        <end position="32"/>
    </location>
</feature>
<feature type="disulfide bond" evidence="1 2">
    <location>
        <begin position="21"/>
        <end position="39"/>
    </location>
</feature>
<sequence length="40" mass="4611">VHVGPCDQVCSRIDPEKDECCRAHGYRGHSSCYYGRMECY</sequence>
<protein>
    <recommendedName>
        <fullName>Spodomicin</fullName>
    </recommendedName>
</protein>
<dbReference type="SMR" id="P83411"/>
<dbReference type="GO" id="GO:0005576">
    <property type="term" value="C:extracellular region"/>
    <property type="evidence" value="ECO:0007669"/>
    <property type="project" value="UniProtKB-SubCell"/>
</dbReference>
<dbReference type="GO" id="GO:0042742">
    <property type="term" value="P:defense response to bacterium"/>
    <property type="evidence" value="ECO:0007669"/>
    <property type="project" value="UniProtKB-KW"/>
</dbReference>
<dbReference type="GO" id="GO:0050832">
    <property type="term" value="P:defense response to fungus"/>
    <property type="evidence" value="ECO:0007669"/>
    <property type="project" value="UniProtKB-KW"/>
</dbReference>
<dbReference type="GO" id="GO:0045087">
    <property type="term" value="P:innate immune response"/>
    <property type="evidence" value="ECO:0007669"/>
    <property type="project" value="UniProtKB-KW"/>
</dbReference>
<dbReference type="GO" id="GO:0031640">
    <property type="term" value="P:killing of cells of another organism"/>
    <property type="evidence" value="ECO:0007669"/>
    <property type="project" value="UniProtKB-KW"/>
</dbReference>
<dbReference type="Gene3D" id="3.30.30.120">
    <property type="entry name" value="Diapause-specific peptide"/>
    <property type="match status" value="1"/>
</dbReference>
<dbReference type="InterPro" id="IPR038203">
    <property type="entry name" value="Diapausin_sf"/>
</dbReference>
<dbReference type="Pfam" id="PF08036">
    <property type="entry name" value="Antimicrobial_6"/>
    <property type="match status" value="1"/>
</dbReference>
<evidence type="ECO:0000250" key="1">
    <source>
        <dbReference type="UniProtKB" id="Q8T0W8"/>
    </source>
</evidence>
<evidence type="ECO:0000269" key="2">
    <source ref="1"/>
</evidence>
<evidence type="ECO:0000305" key="3"/>
<comment type="function">
    <text evidence="2">Fungicide.</text>
</comment>
<comment type="subunit">
    <text evidence="2 3">Monomer.</text>
</comment>
<comment type="subcellular location">
    <subcellularLocation>
        <location evidence="2 3">Secreted</location>
    </subcellularLocation>
</comment>
<comment type="tissue specificity">
    <text evidence="2 3">Hemolymph.</text>
</comment>
<comment type="induction">
    <text evidence="2 3">By bacterial infection.</text>
</comment>
<comment type="PTM">
    <text evidence="2">Contains three disulfide bonds.</text>
</comment>
<comment type="mass spectrometry" mass="4065.4" method="MALDI" evidence="2"/>
<comment type="similarity">
    <text evidence="3">Belongs to the diapausin family.</text>
</comment>
<accession>P83411</accession>